<sequence>MKEMTGLHSLVSIENFIKQHKFSFIYISRPGCTVCHAVLPQLRIVLDQFPNIKLGHINADDVAEVAGRFSVFTVPVLLLFIDGTEFLREARFVHFEQLEQKLKRVYRLYEGE</sequence>
<dbReference type="EMBL" id="AB001488">
    <property type="protein sequence ID" value="BAA19385.1"/>
    <property type="molecule type" value="Genomic_DNA"/>
</dbReference>
<dbReference type="EMBL" id="AL009126">
    <property type="protein sequence ID" value="CAB12358.1"/>
    <property type="molecule type" value="Genomic_DNA"/>
</dbReference>
<dbReference type="PIR" id="G69781">
    <property type="entry name" value="G69781"/>
</dbReference>
<dbReference type="RefSeq" id="NP_388432.1">
    <property type="nucleotide sequence ID" value="NC_000964.3"/>
</dbReference>
<dbReference type="RefSeq" id="WP_003244013.1">
    <property type="nucleotide sequence ID" value="NZ_OZ025638.1"/>
</dbReference>
<dbReference type="SMR" id="P96695"/>
<dbReference type="FunCoup" id="P96695">
    <property type="interactions" value="39"/>
</dbReference>
<dbReference type="STRING" id="224308.BSU05510"/>
<dbReference type="PaxDb" id="224308-BSU05510"/>
<dbReference type="DNASU" id="938062"/>
<dbReference type="EnsemblBacteria" id="CAB12358">
    <property type="protein sequence ID" value="CAB12358"/>
    <property type="gene ID" value="BSU_05510"/>
</dbReference>
<dbReference type="GeneID" id="938062"/>
<dbReference type="KEGG" id="bsu:BSU05510"/>
<dbReference type="PATRIC" id="fig|224308.179.peg.591"/>
<dbReference type="eggNOG" id="COG0526">
    <property type="taxonomic scope" value="Bacteria"/>
</dbReference>
<dbReference type="InParanoid" id="P96695"/>
<dbReference type="OrthoDB" id="411356at2"/>
<dbReference type="PhylomeDB" id="P96695"/>
<dbReference type="BioCyc" id="BSUB:BSU05510-MONOMER"/>
<dbReference type="Proteomes" id="UP000001570">
    <property type="component" value="Chromosome"/>
</dbReference>
<dbReference type="CDD" id="cd02947">
    <property type="entry name" value="TRX_family"/>
    <property type="match status" value="1"/>
</dbReference>
<dbReference type="Gene3D" id="3.40.30.10">
    <property type="entry name" value="Glutaredoxin"/>
    <property type="match status" value="1"/>
</dbReference>
<dbReference type="InterPro" id="IPR036249">
    <property type="entry name" value="Thioredoxin-like_sf"/>
</dbReference>
<dbReference type="InterPro" id="IPR013766">
    <property type="entry name" value="Thioredoxin_domain"/>
</dbReference>
<dbReference type="Pfam" id="PF00085">
    <property type="entry name" value="Thioredoxin"/>
    <property type="match status" value="1"/>
</dbReference>
<dbReference type="SUPFAM" id="SSF52833">
    <property type="entry name" value="Thioredoxin-like"/>
    <property type="match status" value="1"/>
</dbReference>
<protein>
    <recommendedName>
        <fullName>Thioredoxin-like protein YdfQ</fullName>
    </recommendedName>
</protein>
<organism>
    <name type="scientific">Bacillus subtilis (strain 168)</name>
    <dbReference type="NCBI Taxonomy" id="224308"/>
    <lineage>
        <taxon>Bacteria</taxon>
        <taxon>Bacillati</taxon>
        <taxon>Bacillota</taxon>
        <taxon>Bacilli</taxon>
        <taxon>Bacillales</taxon>
        <taxon>Bacillaceae</taxon>
        <taxon>Bacillus</taxon>
    </lineage>
</organism>
<gene>
    <name type="primary">ydfQ</name>
    <name type="ordered locus">BSU05510</name>
</gene>
<proteinExistence type="predicted"/>
<evidence type="ECO:0000250" key="1"/>
<keyword id="KW-1015">Disulfide bond</keyword>
<keyword id="KW-0676">Redox-active center</keyword>
<keyword id="KW-1185">Reference proteome</keyword>
<name>YDFQ_BACSU</name>
<accession>P96695</accession>
<accession>Q797F7</accession>
<reference key="1">
    <citation type="submission" date="1997-03" db="EMBL/GenBank/DDBJ databases">
        <title>A 148 kbp sequence of the region between 35 and 47 degree of the Bacillus subtilis genome.</title>
        <authorList>
            <person name="Kasahara Y."/>
            <person name="Nakai S."/>
            <person name="Lee S."/>
            <person name="Sadaie Y."/>
            <person name="Ogasawara N."/>
        </authorList>
    </citation>
    <scope>NUCLEOTIDE SEQUENCE [GENOMIC DNA]</scope>
    <source>
        <strain>168</strain>
    </source>
</reference>
<reference key="2">
    <citation type="journal article" date="1997" name="Nature">
        <title>The complete genome sequence of the Gram-positive bacterium Bacillus subtilis.</title>
        <authorList>
            <person name="Kunst F."/>
            <person name="Ogasawara N."/>
            <person name="Moszer I."/>
            <person name="Albertini A.M."/>
            <person name="Alloni G."/>
            <person name="Azevedo V."/>
            <person name="Bertero M.G."/>
            <person name="Bessieres P."/>
            <person name="Bolotin A."/>
            <person name="Borchert S."/>
            <person name="Borriss R."/>
            <person name="Boursier L."/>
            <person name="Brans A."/>
            <person name="Braun M."/>
            <person name="Brignell S.C."/>
            <person name="Bron S."/>
            <person name="Brouillet S."/>
            <person name="Bruschi C.V."/>
            <person name="Caldwell B."/>
            <person name="Capuano V."/>
            <person name="Carter N.M."/>
            <person name="Choi S.-K."/>
            <person name="Codani J.-J."/>
            <person name="Connerton I.F."/>
            <person name="Cummings N.J."/>
            <person name="Daniel R.A."/>
            <person name="Denizot F."/>
            <person name="Devine K.M."/>
            <person name="Duesterhoeft A."/>
            <person name="Ehrlich S.D."/>
            <person name="Emmerson P.T."/>
            <person name="Entian K.-D."/>
            <person name="Errington J."/>
            <person name="Fabret C."/>
            <person name="Ferrari E."/>
            <person name="Foulger D."/>
            <person name="Fritz C."/>
            <person name="Fujita M."/>
            <person name="Fujita Y."/>
            <person name="Fuma S."/>
            <person name="Galizzi A."/>
            <person name="Galleron N."/>
            <person name="Ghim S.-Y."/>
            <person name="Glaser P."/>
            <person name="Goffeau A."/>
            <person name="Golightly E.J."/>
            <person name="Grandi G."/>
            <person name="Guiseppi G."/>
            <person name="Guy B.J."/>
            <person name="Haga K."/>
            <person name="Haiech J."/>
            <person name="Harwood C.R."/>
            <person name="Henaut A."/>
            <person name="Hilbert H."/>
            <person name="Holsappel S."/>
            <person name="Hosono S."/>
            <person name="Hullo M.-F."/>
            <person name="Itaya M."/>
            <person name="Jones L.-M."/>
            <person name="Joris B."/>
            <person name="Karamata D."/>
            <person name="Kasahara Y."/>
            <person name="Klaerr-Blanchard M."/>
            <person name="Klein C."/>
            <person name="Kobayashi Y."/>
            <person name="Koetter P."/>
            <person name="Koningstein G."/>
            <person name="Krogh S."/>
            <person name="Kumano M."/>
            <person name="Kurita K."/>
            <person name="Lapidus A."/>
            <person name="Lardinois S."/>
            <person name="Lauber J."/>
            <person name="Lazarevic V."/>
            <person name="Lee S.-M."/>
            <person name="Levine A."/>
            <person name="Liu H."/>
            <person name="Masuda S."/>
            <person name="Mauel C."/>
            <person name="Medigue C."/>
            <person name="Medina N."/>
            <person name="Mellado R.P."/>
            <person name="Mizuno M."/>
            <person name="Moestl D."/>
            <person name="Nakai S."/>
            <person name="Noback M."/>
            <person name="Noone D."/>
            <person name="O'Reilly M."/>
            <person name="Ogawa K."/>
            <person name="Ogiwara A."/>
            <person name="Oudega B."/>
            <person name="Park S.-H."/>
            <person name="Parro V."/>
            <person name="Pohl T.M."/>
            <person name="Portetelle D."/>
            <person name="Porwollik S."/>
            <person name="Prescott A.M."/>
            <person name="Presecan E."/>
            <person name="Pujic P."/>
            <person name="Purnelle B."/>
            <person name="Rapoport G."/>
            <person name="Rey M."/>
            <person name="Reynolds S."/>
            <person name="Rieger M."/>
            <person name="Rivolta C."/>
            <person name="Rocha E."/>
            <person name="Roche B."/>
            <person name="Rose M."/>
            <person name="Sadaie Y."/>
            <person name="Sato T."/>
            <person name="Scanlan E."/>
            <person name="Schleich S."/>
            <person name="Schroeter R."/>
            <person name="Scoffone F."/>
            <person name="Sekiguchi J."/>
            <person name="Sekowska A."/>
            <person name="Seror S.J."/>
            <person name="Serror P."/>
            <person name="Shin B.-S."/>
            <person name="Soldo B."/>
            <person name="Sorokin A."/>
            <person name="Tacconi E."/>
            <person name="Takagi T."/>
            <person name="Takahashi H."/>
            <person name="Takemaru K."/>
            <person name="Takeuchi M."/>
            <person name="Tamakoshi A."/>
            <person name="Tanaka T."/>
            <person name="Terpstra P."/>
            <person name="Tognoni A."/>
            <person name="Tosato V."/>
            <person name="Uchiyama S."/>
            <person name="Vandenbol M."/>
            <person name="Vannier F."/>
            <person name="Vassarotti A."/>
            <person name="Viari A."/>
            <person name="Wambutt R."/>
            <person name="Wedler E."/>
            <person name="Wedler H."/>
            <person name="Weitzenegger T."/>
            <person name="Winters P."/>
            <person name="Wipat A."/>
            <person name="Yamamoto H."/>
            <person name="Yamane K."/>
            <person name="Yasumoto K."/>
            <person name="Yata K."/>
            <person name="Yoshida K."/>
            <person name="Yoshikawa H.-F."/>
            <person name="Zumstein E."/>
            <person name="Yoshikawa H."/>
            <person name="Danchin A."/>
        </authorList>
    </citation>
    <scope>NUCLEOTIDE SEQUENCE [LARGE SCALE GENOMIC DNA]</scope>
    <source>
        <strain>168</strain>
    </source>
</reference>
<feature type="chain" id="PRO_0000360758" description="Thioredoxin-like protein YdfQ">
    <location>
        <begin position="1"/>
        <end position="112"/>
    </location>
</feature>
<feature type="domain" description="Thioredoxin">
    <location>
        <begin position="1"/>
        <end position="107"/>
    </location>
</feature>
<feature type="disulfide bond" description="Redox-active" evidence="1">
    <location>
        <begin position="32"/>
        <end position="35"/>
    </location>
</feature>